<keyword id="KW-0963">Cytoplasm</keyword>
<keyword id="KW-1185">Reference proteome</keyword>
<keyword id="KW-0677">Repeat</keyword>
<keyword id="KW-0802">TPR repeat</keyword>
<protein>
    <recommendedName>
        <fullName evidence="1">Clustered mitochondria protein homolog</fullName>
    </recommendedName>
    <alternativeName>
        <fullName evidence="1">Protein TIF31 homolog</fullName>
    </alternativeName>
</protein>
<reference key="1">
    <citation type="journal article" date="2005" name="Nature">
        <title>Sequencing of Aspergillus nidulans and comparative analysis with A. fumigatus and A. oryzae.</title>
        <authorList>
            <person name="Galagan J.E."/>
            <person name="Calvo S.E."/>
            <person name="Cuomo C."/>
            <person name="Ma L.-J."/>
            <person name="Wortman J.R."/>
            <person name="Batzoglou S."/>
            <person name="Lee S.-I."/>
            <person name="Bastuerkmen M."/>
            <person name="Spevak C.C."/>
            <person name="Clutterbuck J."/>
            <person name="Kapitonov V."/>
            <person name="Jurka J."/>
            <person name="Scazzocchio C."/>
            <person name="Farman M.L."/>
            <person name="Butler J."/>
            <person name="Purcell S."/>
            <person name="Harris S."/>
            <person name="Braus G.H."/>
            <person name="Draht O."/>
            <person name="Busch S."/>
            <person name="D'Enfert C."/>
            <person name="Bouchier C."/>
            <person name="Goldman G.H."/>
            <person name="Bell-Pedersen D."/>
            <person name="Griffiths-Jones S."/>
            <person name="Doonan J.H."/>
            <person name="Yu J."/>
            <person name="Vienken K."/>
            <person name="Pain A."/>
            <person name="Freitag M."/>
            <person name="Selker E.U."/>
            <person name="Archer D.B."/>
            <person name="Penalva M.A."/>
            <person name="Oakley B.R."/>
            <person name="Momany M."/>
            <person name="Tanaka T."/>
            <person name="Kumagai T."/>
            <person name="Asai K."/>
            <person name="Machida M."/>
            <person name="Nierman W.C."/>
            <person name="Denning D.W."/>
            <person name="Caddick M.X."/>
            <person name="Hynes M."/>
            <person name="Paoletti M."/>
            <person name="Fischer R."/>
            <person name="Miller B.L."/>
            <person name="Dyer P.S."/>
            <person name="Sachs M.S."/>
            <person name="Osmani S.A."/>
            <person name="Birren B.W."/>
        </authorList>
    </citation>
    <scope>NUCLEOTIDE SEQUENCE [LARGE SCALE GENOMIC DNA]</scope>
    <source>
        <strain>FGSC A4 / ATCC 38163 / CBS 112.46 / NRRL 194 / M139</strain>
    </source>
</reference>
<reference key="2">
    <citation type="journal article" date="2009" name="Fungal Genet. Biol.">
        <title>The 2008 update of the Aspergillus nidulans genome annotation: a community effort.</title>
        <authorList>
            <person name="Wortman J.R."/>
            <person name="Gilsenan J.M."/>
            <person name="Joardar V."/>
            <person name="Deegan J."/>
            <person name="Clutterbuck J."/>
            <person name="Andersen M.R."/>
            <person name="Archer D."/>
            <person name="Bencina M."/>
            <person name="Braus G."/>
            <person name="Coutinho P."/>
            <person name="von Dohren H."/>
            <person name="Doonan J."/>
            <person name="Driessen A.J."/>
            <person name="Durek P."/>
            <person name="Espeso E."/>
            <person name="Fekete E."/>
            <person name="Flipphi M."/>
            <person name="Estrada C.G."/>
            <person name="Geysens S."/>
            <person name="Goldman G."/>
            <person name="de Groot P.W."/>
            <person name="Hansen K."/>
            <person name="Harris S.D."/>
            <person name="Heinekamp T."/>
            <person name="Helmstaedt K."/>
            <person name="Henrissat B."/>
            <person name="Hofmann G."/>
            <person name="Homan T."/>
            <person name="Horio T."/>
            <person name="Horiuchi H."/>
            <person name="James S."/>
            <person name="Jones M."/>
            <person name="Karaffa L."/>
            <person name="Karanyi Z."/>
            <person name="Kato M."/>
            <person name="Keller N."/>
            <person name="Kelly D.E."/>
            <person name="Kiel J.A."/>
            <person name="Kim J.M."/>
            <person name="van der Klei I.J."/>
            <person name="Klis F.M."/>
            <person name="Kovalchuk A."/>
            <person name="Krasevec N."/>
            <person name="Kubicek C.P."/>
            <person name="Liu B."/>
            <person name="Maccabe A."/>
            <person name="Meyer V."/>
            <person name="Mirabito P."/>
            <person name="Miskei M."/>
            <person name="Mos M."/>
            <person name="Mullins J."/>
            <person name="Nelson D.R."/>
            <person name="Nielsen J."/>
            <person name="Oakley B.R."/>
            <person name="Osmani S.A."/>
            <person name="Pakula T."/>
            <person name="Paszewski A."/>
            <person name="Paulsen I."/>
            <person name="Pilsyk S."/>
            <person name="Pocsi I."/>
            <person name="Punt P.J."/>
            <person name="Ram A.F."/>
            <person name="Ren Q."/>
            <person name="Robellet X."/>
            <person name="Robson G."/>
            <person name="Seiboth B."/>
            <person name="van Solingen P."/>
            <person name="Specht T."/>
            <person name="Sun J."/>
            <person name="Taheri-Talesh N."/>
            <person name="Takeshita N."/>
            <person name="Ussery D."/>
            <person name="vanKuyk P.A."/>
            <person name="Visser H."/>
            <person name="van de Vondervoort P.J."/>
            <person name="de Vries R.P."/>
            <person name="Walton J."/>
            <person name="Xiang X."/>
            <person name="Xiong Y."/>
            <person name="Zeng A.P."/>
            <person name="Brandt B.W."/>
            <person name="Cornell M.J."/>
            <person name="van den Hondel C.A."/>
            <person name="Visser J."/>
            <person name="Oliver S.G."/>
            <person name="Turner G."/>
        </authorList>
    </citation>
    <scope>GENOME REANNOTATION</scope>
    <source>
        <strain>FGSC A4 / ATCC 38163 / CBS 112.46 / NRRL 194 / M139</strain>
    </source>
</reference>
<comment type="function">
    <text evidence="1">mRNA-binding protein involved in proper cytoplasmic distribution of mitochondria.</text>
</comment>
<comment type="subunit">
    <text evidence="1">May associate with the eukaryotic translation initiation factor 3 (eIF-3) complex.</text>
</comment>
<comment type="subcellular location">
    <subcellularLocation>
        <location evidence="1">Cytoplasm</location>
    </subcellularLocation>
</comment>
<comment type="similarity">
    <text evidence="1">Belongs to the CLU family.</text>
</comment>
<comment type="sequence caution" evidence="4">
    <conflict type="erroneous gene model prediction">
        <sequence resource="EMBL-CDS" id="CBF76502"/>
    </conflict>
</comment>
<comment type="sequence caution" evidence="4">
    <conflict type="erroneous gene model prediction">
        <sequence resource="EMBL-CDS" id="EAA60986"/>
    </conflict>
</comment>
<organism>
    <name type="scientific">Emericella nidulans (strain FGSC A4 / ATCC 38163 / CBS 112.46 / NRRL 194 / M139)</name>
    <name type="common">Aspergillus nidulans</name>
    <dbReference type="NCBI Taxonomy" id="227321"/>
    <lineage>
        <taxon>Eukaryota</taxon>
        <taxon>Fungi</taxon>
        <taxon>Dikarya</taxon>
        <taxon>Ascomycota</taxon>
        <taxon>Pezizomycotina</taxon>
        <taxon>Eurotiomycetes</taxon>
        <taxon>Eurotiomycetidae</taxon>
        <taxon>Eurotiales</taxon>
        <taxon>Aspergillaceae</taxon>
        <taxon>Aspergillus</taxon>
        <taxon>Aspergillus subgen. Nidulantes</taxon>
    </lineage>
</organism>
<proteinExistence type="inferred from homology"/>
<feature type="chain" id="PRO_0000419437" description="Clustered mitochondria protein homolog">
    <location>
        <begin position="1"/>
        <end position="1225"/>
    </location>
</feature>
<feature type="domain" description="Clu" evidence="2">
    <location>
        <begin position="281"/>
        <end position="532"/>
    </location>
</feature>
<feature type="repeat" description="TPR 1">
    <location>
        <begin position="949"/>
        <end position="982"/>
    </location>
</feature>
<feature type="repeat" description="TPR 2">
    <location>
        <begin position="991"/>
        <end position="1024"/>
    </location>
</feature>
<feature type="repeat" description="TPR 3">
    <location>
        <begin position="1033"/>
        <end position="1066"/>
    </location>
</feature>
<feature type="region of interest" description="Disordered" evidence="3">
    <location>
        <begin position="1"/>
        <end position="22"/>
    </location>
</feature>
<feature type="region of interest" description="Disordered" evidence="3">
    <location>
        <begin position="577"/>
        <end position="605"/>
    </location>
</feature>
<feature type="region of interest" description="Disordered" evidence="3">
    <location>
        <begin position="846"/>
        <end position="878"/>
    </location>
</feature>
<feature type="region of interest" description="Disordered" evidence="3">
    <location>
        <begin position="1153"/>
        <end position="1225"/>
    </location>
</feature>
<feature type="compositionally biased region" description="Polar residues" evidence="3">
    <location>
        <begin position="1153"/>
        <end position="1184"/>
    </location>
</feature>
<sequence>MAQTNGEMEHSKESPEQITNGNNQEVVQEDDGAGGLFQISVKLPHEPYKIQVMVSSQEQVQDVRQSIVELPGTFQYTCFHLEFNGKRINDFVELSEVPGLQADSEIVLVEDPYTEKDARMHVVRLRELLGAAGDRVDTINGVNAGLSLHDSIAAEAGSEKSEKEHSLAKYDIPGSSSLKTILPRSEAPAPKTVKSISLSPWNPPPHHLRQKGHLLYLQVTTNEGEQFQITSHVSGFFVNKCSNSRFDPFPKTIPKKGSAHSLLNLISQLSPSFDAAFKELQESNNQKDLLTTFPFQNSIPSSPWLVAPPASNSLQTTKELPRETVQDRVFRERLTSKLFADYNEAAARGAVLVARGEVAPLNPTEAQDAQIFVYNNIFYSFGADGVGTFASEGGDEAARVAVGKDVLGIKAVNQLDINGLFTPGTIVVDYMGKRIVGQSIVPGIFKQREPGEHQIDYGGVEGKDVVATHPDFVPVFEKLSKALRIKKHPVWDKDNQRHDLEGSVETKGLLGTDGRKYVLDLYRVTPLDVAWNEEEDGDAYPHRMSVLRLELVESYWRAKMSQYVKAEVERRRAAKAEEAAKKEKSSEDTESKEEGSEEKSEEALDQERVDISGFSLALNPDVFSGQIPQTDEEKEQWAQDEKEVRDACDFLRSKVMPELIQDLHDGDVGFPMDGQSLSQLLHKRGINIRYLGKLATLAKEKGSRLEALSTLLVQEMVVRAFKHITNKYLRNVPAPFAASCVAHLLNCLLGADVNATPRAEIDSSLREIYPEGDFSFEKVTPEALRAEIEKQVTLRYRFNLESQWFNSLRHLQLLRDIAIKLGLQLAARDFVFTKAQAEGLKVLPVANGVNGTGQDEGSKKKKKNKNGDSGSPARSAAAEKPIVTFTPDDIVNIVPLVKDASPRSSLAEEALEAGRISLMQNQKQLGQELILESLSLHEQIYGILHPEVAKLYHQLSMLYYQTDEKDAAVELARKAVIVTERTLGVDSADTILSYLNLSLFEHASGNTKVALAYIKHAMDLWKIIFGSNHPDSITTMNNAAVMLQHLKQYSDSRKWFEASLSVCESLFGKQSINTATILFQLAQALALDQDSKAAVGKMRDAYNIFLSQLGPEDRNTKEAETWLEQLTQNAVSIAKHAKDIQARRLRRINMGTRTTLGTQIQPQVGQSTADVSAPSQASNSSIDSRNIDELLKFIEGGDTSSSRTKQKKRAAASNPKLRGSKKSSA</sequence>
<name>CLU_EMENI</name>
<evidence type="ECO:0000255" key="1">
    <source>
        <dbReference type="HAMAP-Rule" id="MF_03013"/>
    </source>
</evidence>
<evidence type="ECO:0000255" key="2">
    <source>
        <dbReference type="PROSITE-ProRule" id="PRU01167"/>
    </source>
</evidence>
<evidence type="ECO:0000256" key="3">
    <source>
        <dbReference type="SAM" id="MobiDB-lite"/>
    </source>
</evidence>
<evidence type="ECO:0000305" key="4"/>
<gene>
    <name evidence="1" type="primary">clu1</name>
    <name type="synonym">tif31</name>
    <name type="ORF">AN4908</name>
</gene>
<dbReference type="EMBL" id="BN001303">
    <property type="protein sequence ID" value="CBF76502.1"/>
    <property type="status" value="ALT_SEQ"/>
    <property type="molecule type" value="Genomic_DNA"/>
</dbReference>
<dbReference type="EMBL" id="AACD01000084">
    <property type="protein sequence ID" value="EAA60986.1"/>
    <property type="status" value="ALT_SEQ"/>
    <property type="molecule type" value="Genomic_DNA"/>
</dbReference>
<dbReference type="RefSeq" id="XP_662512.1">
    <property type="nucleotide sequence ID" value="XM_657420.1"/>
</dbReference>
<dbReference type="SMR" id="Q5B3H2"/>
<dbReference type="FunCoup" id="Q5B3H2">
    <property type="interactions" value="963"/>
</dbReference>
<dbReference type="STRING" id="227321.Q5B3H2"/>
<dbReference type="KEGG" id="ani:ANIA_04908"/>
<dbReference type="VEuPathDB" id="FungiDB:AN4908"/>
<dbReference type="eggNOG" id="KOG1839">
    <property type="taxonomic scope" value="Eukaryota"/>
</dbReference>
<dbReference type="HOGENOM" id="CLU_003256_2_0_1"/>
<dbReference type="InParanoid" id="Q5B3H2"/>
<dbReference type="OrthoDB" id="1414216at2759"/>
<dbReference type="Proteomes" id="UP000000560">
    <property type="component" value="Chromosome III"/>
</dbReference>
<dbReference type="GO" id="GO:0005737">
    <property type="term" value="C:cytoplasm"/>
    <property type="evidence" value="ECO:0000318"/>
    <property type="project" value="GO_Central"/>
</dbReference>
<dbReference type="GO" id="GO:0003729">
    <property type="term" value="F:mRNA binding"/>
    <property type="evidence" value="ECO:0000318"/>
    <property type="project" value="GO_Central"/>
</dbReference>
<dbReference type="GO" id="GO:0048312">
    <property type="term" value="P:intracellular distribution of mitochondria"/>
    <property type="evidence" value="ECO:0000318"/>
    <property type="project" value="GO_Central"/>
</dbReference>
<dbReference type="GO" id="GO:0007005">
    <property type="term" value="P:mitochondrion organization"/>
    <property type="evidence" value="ECO:0007669"/>
    <property type="project" value="UniProtKB-UniRule"/>
</dbReference>
<dbReference type="CDD" id="cd15466">
    <property type="entry name" value="CLU-central"/>
    <property type="match status" value="1"/>
</dbReference>
<dbReference type="FunFam" id="1.25.40.10:FF:000293">
    <property type="entry name" value="Clustered mitochondria protein homolog"/>
    <property type="match status" value="1"/>
</dbReference>
<dbReference type="FunFam" id="1.25.40.10:FF:000532">
    <property type="entry name" value="Clustered mitochondria protein homolog"/>
    <property type="match status" value="1"/>
</dbReference>
<dbReference type="Gene3D" id="1.25.40.10">
    <property type="entry name" value="Tetratricopeptide repeat domain"/>
    <property type="match status" value="2"/>
</dbReference>
<dbReference type="HAMAP" id="MF_03013">
    <property type="entry name" value="CLU"/>
    <property type="match status" value="1"/>
</dbReference>
<dbReference type="InterPro" id="IPR033646">
    <property type="entry name" value="CLU-central"/>
</dbReference>
<dbReference type="InterPro" id="IPR025697">
    <property type="entry name" value="CLU_dom"/>
</dbReference>
<dbReference type="InterPro" id="IPR028275">
    <property type="entry name" value="CLU_N"/>
</dbReference>
<dbReference type="InterPro" id="IPR027523">
    <property type="entry name" value="CLU_prot"/>
</dbReference>
<dbReference type="InterPro" id="IPR023231">
    <property type="entry name" value="GSKIP_dom_sf"/>
</dbReference>
<dbReference type="InterPro" id="IPR011990">
    <property type="entry name" value="TPR-like_helical_dom_sf"/>
</dbReference>
<dbReference type="InterPro" id="IPR019734">
    <property type="entry name" value="TPR_rpt"/>
</dbReference>
<dbReference type="PANTHER" id="PTHR12601:SF6">
    <property type="entry name" value="CLUSTERED MITOCHONDRIA PROTEIN HOMOLOG"/>
    <property type="match status" value="1"/>
</dbReference>
<dbReference type="PANTHER" id="PTHR12601">
    <property type="entry name" value="EUKARYOTIC TRANSLATION INITIATION FACTOR 3 SUBUNIT EIF-3"/>
    <property type="match status" value="1"/>
</dbReference>
<dbReference type="Pfam" id="PF13236">
    <property type="entry name" value="CLU"/>
    <property type="match status" value="1"/>
</dbReference>
<dbReference type="Pfam" id="PF15044">
    <property type="entry name" value="CLU_N"/>
    <property type="match status" value="1"/>
</dbReference>
<dbReference type="Pfam" id="PF12807">
    <property type="entry name" value="eIF3_p135"/>
    <property type="match status" value="1"/>
</dbReference>
<dbReference type="Pfam" id="PF13374">
    <property type="entry name" value="TPR_10"/>
    <property type="match status" value="2"/>
</dbReference>
<dbReference type="Pfam" id="PF13424">
    <property type="entry name" value="TPR_12"/>
    <property type="match status" value="1"/>
</dbReference>
<dbReference type="SUPFAM" id="SSF103107">
    <property type="entry name" value="Hypothetical protein c14orf129, hspc210"/>
    <property type="match status" value="1"/>
</dbReference>
<dbReference type="SUPFAM" id="SSF48452">
    <property type="entry name" value="TPR-like"/>
    <property type="match status" value="2"/>
</dbReference>
<dbReference type="PROSITE" id="PS51823">
    <property type="entry name" value="CLU"/>
    <property type="match status" value="1"/>
</dbReference>
<dbReference type="PROSITE" id="PS50005">
    <property type="entry name" value="TPR"/>
    <property type="match status" value="1"/>
</dbReference>
<accession>Q5B3H2</accession>
<accession>C8V9G0</accession>